<keyword id="KW-0665">Pyrimidine biosynthesis</keyword>
<keyword id="KW-0808">Transferase</keyword>
<proteinExistence type="inferred from homology"/>
<reference key="1">
    <citation type="journal article" date="2004" name="Proc. Natl. Acad. Sci. U.S.A.">
        <title>Genome sequence of Picrophilus torridus and its implications for life around pH 0.</title>
        <authorList>
            <person name="Fuetterer O."/>
            <person name="Angelov A."/>
            <person name="Liesegang H."/>
            <person name="Gottschalk G."/>
            <person name="Schleper C."/>
            <person name="Schepers B."/>
            <person name="Dock C."/>
            <person name="Antranikian G."/>
            <person name="Liebl W."/>
        </authorList>
    </citation>
    <scope>NUCLEOTIDE SEQUENCE [LARGE SCALE GENOMIC DNA]</scope>
    <source>
        <strain>ATCC 700027 / DSM 9790 / JCM 10055 / NBRC 100828 / KAW 2/3</strain>
    </source>
</reference>
<feature type="chain" id="PRO_0000113252" description="Aspartate carbamoyltransferase catalytic subunit">
    <location>
        <begin position="1"/>
        <end position="304"/>
    </location>
</feature>
<feature type="binding site" evidence="1">
    <location>
        <position position="56"/>
    </location>
    <ligand>
        <name>carbamoyl phosphate</name>
        <dbReference type="ChEBI" id="CHEBI:58228"/>
    </ligand>
</feature>
<feature type="binding site" evidence="1">
    <location>
        <position position="57"/>
    </location>
    <ligand>
        <name>carbamoyl phosphate</name>
        <dbReference type="ChEBI" id="CHEBI:58228"/>
    </ligand>
</feature>
<feature type="binding site" evidence="1">
    <location>
        <position position="85"/>
    </location>
    <ligand>
        <name>L-aspartate</name>
        <dbReference type="ChEBI" id="CHEBI:29991"/>
    </ligand>
</feature>
<feature type="binding site" evidence="1">
    <location>
        <position position="106"/>
    </location>
    <ligand>
        <name>carbamoyl phosphate</name>
        <dbReference type="ChEBI" id="CHEBI:58228"/>
    </ligand>
</feature>
<feature type="binding site" evidence="1">
    <location>
        <position position="134"/>
    </location>
    <ligand>
        <name>carbamoyl phosphate</name>
        <dbReference type="ChEBI" id="CHEBI:58228"/>
    </ligand>
</feature>
<feature type="binding site" evidence="1">
    <location>
        <position position="137"/>
    </location>
    <ligand>
        <name>carbamoyl phosphate</name>
        <dbReference type="ChEBI" id="CHEBI:58228"/>
    </ligand>
</feature>
<feature type="binding site" evidence="1">
    <location>
        <position position="167"/>
    </location>
    <ligand>
        <name>L-aspartate</name>
        <dbReference type="ChEBI" id="CHEBI:29991"/>
    </ligand>
</feature>
<feature type="binding site" evidence="1">
    <location>
        <position position="226"/>
    </location>
    <ligand>
        <name>L-aspartate</name>
        <dbReference type="ChEBI" id="CHEBI:29991"/>
    </ligand>
</feature>
<feature type="binding site" evidence="1">
    <location>
        <position position="265"/>
    </location>
    <ligand>
        <name>carbamoyl phosphate</name>
        <dbReference type="ChEBI" id="CHEBI:58228"/>
    </ligand>
</feature>
<feature type="binding site" evidence="1">
    <location>
        <position position="266"/>
    </location>
    <ligand>
        <name>carbamoyl phosphate</name>
        <dbReference type="ChEBI" id="CHEBI:58228"/>
    </ligand>
</feature>
<accession>Q6L0F2</accession>
<dbReference type="EC" id="2.1.3.2" evidence="1"/>
<dbReference type="EMBL" id="AE017261">
    <property type="protein sequence ID" value="AAT43550.1"/>
    <property type="molecule type" value="Genomic_DNA"/>
</dbReference>
<dbReference type="RefSeq" id="WP_011177766.1">
    <property type="nucleotide sequence ID" value="NC_005877.1"/>
</dbReference>
<dbReference type="SMR" id="Q6L0F2"/>
<dbReference type="FunCoup" id="Q6L0F2">
    <property type="interactions" value="195"/>
</dbReference>
<dbReference type="STRING" id="263820.PTO0965"/>
<dbReference type="PaxDb" id="263820-PTO0965"/>
<dbReference type="GeneID" id="2843998"/>
<dbReference type="KEGG" id="pto:PTO0965"/>
<dbReference type="PATRIC" id="fig|263820.9.peg.1004"/>
<dbReference type="eggNOG" id="arCOG00911">
    <property type="taxonomic scope" value="Archaea"/>
</dbReference>
<dbReference type="HOGENOM" id="CLU_043846_1_2_2"/>
<dbReference type="InParanoid" id="Q6L0F2"/>
<dbReference type="OrthoDB" id="7792at2157"/>
<dbReference type="UniPathway" id="UPA00070">
    <property type="reaction ID" value="UER00116"/>
</dbReference>
<dbReference type="Proteomes" id="UP000000438">
    <property type="component" value="Chromosome"/>
</dbReference>
<dbReference type="GO" id="GO:0016597">
    <property type="term" value="F:amino acid binding"/>
    <property type="evidence" value="ECO:0007669"/>
    <property type="project" value="InterPro"/>
</dbReference>
<dbReference type="GO" id="GO:0004070">
    <property type="term" value="F:aspartate carbamoyltransferase activity"/>
    <property type="evidence" value="ECO:0007669"/>
    <property type="project" value="UniProtKB-UniRule"/>
</dbReference>
<dbReference type="GO" id="GO:0006207">
    <property type="term" value="P:'de novo' pyrimidine nucleobase biosynthetic process"/>
    <property type="evidence" value="ECO:0007669"/>
    <property type="project" value="InterPro"/>
</dbReference>
<dbReference type="GO" id="GO:0044205">
    <property type="term" value="P:'de novo' UMP biosynthetic process"/>
    <property type="evidence" value="ECO:0007669"/>
    <property type="project" value="UniProtKB-UniRule"/>
</dbReference>
<dbReference type="GO" id="GO:0006520">
    <property type="term" value="P:amino acid metabolic process"/>
    <property type="evidence" value="ECO:0007669"/>
    <property type="project" value="InterPro"/>
</dbReference>
<dbReference type="FunFam" id="3.40.50.1370:FF:000001">
    <property type="entry name" value="Aspartate carbamoyltransferase"/>
    <property type="match status" value="1"/>
</dbReference>
<dbReference type="FunFam" id="3.40.50.1370:FF:000002">
    <property type="entry name" value="Aspartate carbamoyltransferase 2"/>
    <property type="match status" value="1"/>
</dbReference>
<dbReference type="Gene3D" id="3.40.50.1370">
    <property type="entry name" value="Aspartate/ornithine carbamoyltransferase"/>
    <property type="match status" value="2"/>
</dbReference>
<dbReference type="HAMAP" id="MF_00001">
    <property type="entry name" value="Asp_carb_tr"/>
    <property type="match status" value="1"/>
</dbReference>
<dbReference type="InterPro" id="IPR006132">
    <property type="entry name" value="Asp/Orn_carbamoyltranf_P-bd"/>
</dbReference>
<dbReference type="InterPro" id="IPR006130">
    <property type="entry name" value="Asp/Orn_carbamoylTrfase"/>
</dbReference>
<dbReference type="InterPro" id="IPR036901">
    <property type="entry name" value="Asp/Orn_carbamoylTrfase_sf"/>
</dbReference>
<dbReference type="InterPro" id="IPR002082">
    <property type="entry name" value="Asp_carbamoyltransf"/>
</dbReference>
<dbReference type="InterPro" id="IPR006131">
    <property type="entry name" value="Asp_carbamoyltransf_Asp/Orn-bd"/>
</dbReference>
<dbReference type="NCBIfam" id="TIGR00670">
    <property type="entry name" value="asp_carb_tr"/>
    <property type="match status" value="1"/>
</dbReference>
<dbReference type="NCBIfam" id="NF002032">
    <property type="entry name" value="PRK00856.1"/>
    <property type="match status" value="1"/>
</dbReference>
<dbReference type="PANTHER" id="PTHR45753:SF6">
    <property type="entry name" value="ASPARTATE CARBAMOYLTRANSFERASE"/>
    <property type="match status" value="1"/>
</dbReference>
<dbReference type="PANTHER" id="PTHR45753">
    <property type="entry name" value="ORNITHINE CARBAMOYLTRANSFERASE, MITOCHONDRIAL"/>
    <property type="match status" value="1"/>
</dbReference>
<dbReference type="Pfam" id="PF00185">
    <property type="entry name" value="OTCace"/>
    <property type="match status" value="1"/>
</dbReference>
<dbReference type="Pfam" id="PF02729">
    <property type="entry name" value="OTCace_N"/>
    <property type="match status" value="1"/>
</dbReference>
<dbReference type="PRINTS" id="PR00100">
    <property type="entry name" value="AOTCASE"/>
</dbReference>
<dbReference type="PRINTS" id="PR00101">
    <property type="entry name" value="ATCASE"/>
</dbReference>
<dbReference type="SUPFAM" id="SSF53671">
    <property type="entry name" value="Aspartate/ornithine carbamoyltransferase"/>
    <property type="match status" value="1"/>
</dbReference>
<dbReference type="PROSITE" id="PS00097">
    <property type="entry name" value="CARBAMOYLTRANSFERASE"/>
    <property type="match status" value="1"/>
</dbReference>
<evidence type="ECO:0000255" key="1">
    <source>
        <dbReference type="HAMAP-Rule" id="MF_00001"/>
    </source>
</evidence>
<protein>
    <recommendedName>
        <fullName evidence="1">Aspartate carbamoyltransferase catalytic subunit</fullName>
        <ecNumber evidence="1">2.1.3.2</ecNumber>
    </recommendedName>
    <alternativeName>
        <fullName evidence="1">Aspartate transcarbamylase</fullName>
        <shortName evidence="1">ATCase</shortName>
    </alternativeName>
</protein>
<sequence length="304" mass="33756">MLKNNSVISINDLSDEDLNLIFNTADSMAGNLKNGSQIKTMSGRIMATLFFEPSTRTRLSFESAMQRLGGSVISMADSKSSSTAKGETLADTTRMVSSYSDIIVVRHPLEGAARLVQKFSSRPVINAGDGSGEHPTQTLVDLYTIKKSFGDINNLEISIIGDLRYGRTVHSLLLALSRYNVRINLVSPDLLRLPGHVMSRLKNIKINEYNDLNNVIESSDVFYVTRIQRERFTDKNDYNKVIGTYGITEKDTEKMKENAIIMHPLPRVDEISSSVDNTKNAKYFIQAANGIPVRMALISLILGD</sequence>
<gene>
    <name evidence="1" type="primary">pyrB</name>
    <name type="ordered locus">PTO0965</name>
</gene>
<name>PYRB_PICTO</name>
<organism>
    <name type="scientific">Picrophilus torridus (strain ATCC 700027 / DSM 9790 / JCM 10055 / NBRC 100828 / KAW 2/3)</name>
    <dbReference type="NCBI Taxonomy" id="1122961"/>
    <lineage>
        <taxon>Archaea</taxon>
        <taxon>Methanobacteriati</taxon>
        <taxon>Thermoplasmatota</taxon>
        <taxon>Thermoplasmata</taxon>
        <taxon>Thermoplasmatales</taxon>
        <taxon>Picrophilaceae</taxon>
        <taxon>Picrophilus</taxon>
    </lineage>
</organism>
<comment type="function">
    <text evidence="1">Catalyzes the condensation of carbamoyl phosphate and aspartate to form carbamoyl aspartate and inorganic phosphate, the committed step in the de novo pyrimidine nucleotide biosynthesis pathway.</text>
</comment>
<comment type="catalytic activity">
    <reaction evidence="1">
        <text>carbamoyl phosphate + L-aspartate = N-carbamoyl-L-aspartate + phosphate + H(+)</text>
        <dbReference type="Rhea" id="RHEA:20013"/>
        <dbReference type="ChEBI" id="CHEBI:15378"/>
        <dbReference type="ChEBI" id="CHEBI:29991"/>
        <dbReference type="ChEBI" id="CHEBI:32814"/>
        <dbReference type="ChEBI" id="CHEBI:43474"/>
        <dbReference type="ChEBI" id="CHEBI:58228"/>
        <dbReference type="EC" id="2.1.3.2"/>
    </reaction>
</comment>
<comment type="pathway">
    <text evidence="1">Pyrimidine metabolism; UMP biosynthesis via de novo pathway; (S)-dihydroorotate from bicarbonate: step 2/3.</text>
</comment>
<comment type="subunit">
    <text evidence="1">Heterooligomer of catalytic and regulatory chains.</text>
</comment>
<comment type="similarity">
    <text evidence="1">Belongs to the aspartate/ornithine carbamoyltransferase superfamily. ATCase family.</text>
</comment>